<evidence type="ECO:0000255" key="1">
    <source>
        <dbReference type="HAMAP-Rule" id="MF_01310"/>
    </source>
</evidence>
<evidence type="ECO:0000256" key="2">
    <source>
        <dbReference type="SAM" id="MobiDB-lite"/>
    </source>
</evidence>
<evidence type="ECO:0000305" key="3"/>
<proteinExistence type="inferred from homology"/>
<keyword id="KW-0150">Chloroplast</keyword>
<keyword id="KW-0934">Plastid</keyword>
<keyword id="KW-0687">Ribonucleoprotein</keyword>
<keyword id="KW-0689">Ribosomal protein</keyword>
<keyword id="KW-0694">RNA-binding</keyword>
<keyword id="KW-0699">rRNA-binding</keyword>
<organism>
    <name type="scientific">Eucalyptus globulus subsp. globulus</name>
    <name type="common">Tasmanian blue gum</name>
    <dbReference type="NCBI Taxonomy" id="71271"/>
    <lineage>
        <taxon>Eukaryota</taxon>
        <taxon>Viridiplantae</taxon>
        <taxon>Streptophyta</taxon>
        <taxon>Embryophyta</taxon>
        <taxon>Tracheophyta</taxon>
        <taxon>Spermatophyta</taxon>
        <taxon>Magnoliopsida</taxon>
        <taxon>eudicotyledons</taxon>
        <taxon>Gunneridae</taxon>
        <taxon>Pentapetalae</taxon>
        <taxon>rosids</taxon>
        <taxon>malvids</taxon>
        <taxon>Myrtales</taxon>
        <taxon>Myrtaceae</taxon>
        <taxon>Myrtoideae</taxon>
        <taxon>Eucalypteae</taxon>
        <taxon>Eucalyptus</taxon>
    </lineage>
</organism>
<protein>
    <recommendedName>
        <fullName evidence="1">Small ribosomal subunit protein uS11c</fullName>
    </recommendedName>
    <alternativeName>
        <fullName evidence="3">30S ribosomal protein S11, chloroplastic</fullName>
    </alternativeName>
</protein>
<sequence length="138" mass="14949">MAKSIPRTGSRRNVRSGSRKSTRRIPKGVIHVQASFNNTIVTVTDVRGRVISWSSAGTCGFNGTRRGTPFAAQTAAGNAIRTVVDQGMQRAEVMIKGPGLGRDAALRAIRRSGILLSFVRDVTPMPHNGCRPPKKRRV</sequence>
<reference key="1">
    <citation type="journal article" date="2005" name="DNA Res.">
        <title>Complete nucleotide sequence of the chloroplast genome from the Tasmanian blue gum, Eucalyptus globulus (Myrtaceae).</title>
        <authorList>
            <person name="Steane D.A."/>
        </authorList>
    </citation>
    <scope>NUCLEOTIDE SEQUENCE [LARGE SCALE GENOMIC DNA]</scope>
</reference>
<name>RR11_EUCGG</name>
<gene>
    <name evidence="1" type="primary">rps11</name>
</gene>
<dbReference type="EMBL" id="AY780259">
    <property type="protein sequence ID" value="AAX21060.1"/>
    <property type="molecule type" value="Genomic_DNA"/>
</dbReference>
<dbReference type="RefSeq" id="YP_636332.1">
    <property type="nucleotide sequence ID" value="NC_008115.1"/>
</dbReference>
<dbReference type="SMR" id="Q49KW5"/>
<dbReference type="GeneID" id="4108416"/>
<dbReference type="GO" id="GO:0009507">
    <property type="term" value="C:chloroplast"/>
    <property type="evidence" value="ECO:0007669"/>
    <property type="project" value="UniProtKB-SubCell"/>
</dbReference>
<dbReference type="GO" id="GO:1990904">
    <property type="term" value="C:ribonucleoprotein complex"/>
    <property type="evidence" value="ECO:0007669"/>
    <property type="project" value="UniProtKB-KW"/>
</dbReference>
<dbReference type="GO" id="GO:0005840">
    <property type="term" value="C:ribosome"/>
    <property type="evidence" value="ECO:0007669"/>
    <property type="project" value="UniProtKB-KW"/>
</dbReference>
<dbReference type="GO" id="GO:0019843">
    <property type="term" value="F:rRNA binding"/>
    <property type="evidence" value="ECO:0007669"/>
    <property type="project" value="UniProtKB-UniRule"/>
</dbReference>
<dbReference type="GO" id="GO:0003735">
    <property type="term" value="F:structural constituent of ribosome"/>
    <property type="evidence" value="ECO:0007669"/>
    <property type="project" value="InterPro"/>
</dbReference>
<dbReference type="GO" id="GO:0006412">
    <property type="term" value="P:translation"/>
    <property type="evidence" value="ECO:0007669"/>
    <property type="project" value="UniProtKB-UniRule"/>
</dbReference>
<dbReference type="FunFam" id="3.30.420.80:FF:000003">
    <property type="entry name" value="30S ribosomal protein S11, chloroplastic"/>
    <property type="match status" value="1"/>
</dbReference>
<dbReference type="Gene3D" id="3.30.420.80">
    <property type="entry name" value="Ribosomal protein S11"/>
    <property type="match status" value="1"/>
</dbReference>
<dbReference type="HAMAP" id="MF_01310">
    <property type="entry name" value="Ribosomal_uS11"/>
    <property type="match status" value="1"/>
</dbReference>
<dbReference type="InterPro" id="IPR001971">
    <property type="entry name" value="Ribosomal_uS11"/>
</dbReference>
<dbReference type="InterPro" id="IPR019981">
    <property type="entry name" value="Ribosomal_uS11_bac-type"/>
</dbReference>
<dbReference type="InterPro" id="IPR018102">
    <property type="entry name" value="Ribosomal_uS11_CS"/>
</dbReference>
<dbReference type="InterPro" id="IPR036967">
    <property type="entry name" value="Ribosomal_uS11_sf"/>
</dbReference>
<dbReference type="NCBIfam" id="NF003698">
    <property type="entry name" value="PRK05309.1"/>
    <property type="match status" value="1"/>
</dbReference>
<dbReference type="NCBIfam" id="TIGR03632">
    <property type="entry name" value="uS11_bact"/>
    <property type="match status" value="1"/>
</dbReference>
<dbReference type="PANTHER" id="PTHR11759">
    <property type="entry name" value="40S RIBOSOMAL PROTEIN S14/30S RIBOSOMAL PROTEIN S11"/>
    <property type="match status" value="1"/>
</dbReference>
<dbReference type="Pfam" id="PF00411">
    <property type="entry name" value="Ribosomal_S11"/>
    <property type="match status" value="1"/>
</dbReference>
<dbReference type="PIRSF" id="PIRSF002131">
    <property type="entry name" value="Ribosomal_S11"/>
    <property type="match status" value="1"/>
</dbReference>
<dbReference type="SUPFAM" id="SSF53137">
    <property type="entry name" value="Translational machinery components"/>
    <property type="match status" value="1"/>
</dbReference>
<dbReference type="PROSITE" id="PS00054">
    <property type="entry name" value="RIBOSOMAL_S11"/>
    <property type="match status" value="1"/>
</dbReference>
<geneLocation type="chloroplast"/>
<accession>Q49KW5</accession>
<comment type="subunit">
    <text evidence="1">Part of the 30S ribosomal subunit.</text>
</comment>
<comment type="subcellular location">
    <subcellularLocation>
        <location>Plastid</location>
        <location>Chloroplast</location>
    </subcellularLocation>
</comment>
<comment type="similarity">
    <text evidence="1">Belongs to the universal ribosomal protein uS11 family.</text>
</comment>
<feature type="chain" id="PRO_0000230449" description="Small ribosomal subunit protein uS11c">
    <location>
        <begin position="1"/>
        <end position="138"/>
    </location>
</feature>
<feature type="region of interest" description="Disordered" evidence="2">
    <location>
        <begin position="1"/>
        <end position="25"/>
    </location>
</feature>
<feature type="compositionally biased region" description="Basic residues" evidence="2">
    <location>
        <begin position="9"/>
        <end position="25"/>
    </location>
</feature>